<proteinExistence type="inferred from homology"/>
<dbReference type="EMBL" id="AE017285">
    <property type="protein sequence ID" value="AAS95315.1"/>
    <property type="molecule type" value="Genomic_DNA"/>
</dbReference>
<dbReference type="RefSeq" id="WP_010938136.1">
    <property type="nucleotide sequence ID" value="NC_002937.3"/>
</dbReference>
<dbReference type="RefSeq" id="YP_010056.1">
    <property type="nucleotide sequence ID" value="NC_002937.3"/>
</dbReference>
<dbReference type="SMR" id="Q72DU4"/>
<dbReference type="STRING" id="882.DVU_0835"/>
<dbReference type="PaxDb" id="882-DVU_0835"/>
<dbReference type="EnsemblBacteria" id="AAS95315">
    <property type="protein sequence ID" value="AAS95315"/>
    <property type="gene ID" value="DVU_0835"/>
</dbReference>
<dbReference type="KEGG" id="dvu:DVU_0835"/>
<dbReference type="PATRIC" id="fig|882.5.peg.781"/>
<dbReference type="eggNOG" id="COG0335">
    <property type="taxonomic scope" value="Bacteria"/>
</dbReference>
<dbReference type="HOGENOM" id="CLU_103507_2_2_7"/>
<dbReference type="OrthoDB" id="9803541at2"/>
<dbReference type="PhylomeDB" id="Q72DU4"/>
<dbReference type="Proteomes" id="UP000002194">
    <property type="component" value="Chromosome"/>
</dbReference>
<dbReference type="GO" id="GO:0022625">
    <property type="term" value="C:cytosolic large ribosomal subunit"/>
    <property type="evidence" value="ECO:0007669"/>
    <property type="project" value="TreeGrafter"/>
</dbReference>
<dbReference type="GO" id="GO:0003735">
    <property type="term" value="F:structural constituent of ribosome"/>
    <property type="evidence" value="ECO:0007669"/>
    <property type="project" value="InterPro"/>
</dbReference>
<dbReference type="GO" id="GO:0006412">
    <property type="term" value="P:translation"/>
    <property type="evidence" value="ECO:0007669"/>
    <property type="project" value="UniProtKB-UniRule"/>
</dbReference>
<dbReference type="FunFam" id="2.30.30.790:FF:000001">
    <property type="entry name" value="50S ribosomal protein L19"/>
    <property type="match status" value="1"/>
</dbReference>
<dbReference type="Gene3D" id="2.30.30.790">
    <property type="match status" value="1"/>
</dbReference>
<dbReference type="HAMAP" id="MF_00402">
    <property type="entry name" value="Ribosomal_bL19"/>
    <property type="match status" value="1"/>
</dbReference>
<dbReference type="InterPro" id="IPR001857">
    <property type="entry name" value="Ribosomal_bL19"/>
</dbReference>
<dbReference type="InterPro" id="IPR018257">
    <property type="entry name" value="Ribosomal_bL19_CS"/>
</dbReference>
<dbReference type="InterPro" id="IPR038657">
    <property type="entry name" value="Ribosomal_bL19_sf"/>
</dbReference>
<dbReference type="InterPro" id="IPR008991">
    <property type="entry name" value="Translation_prot_SH3-like_sf"/>
</dbReference>
<dbReference type="NCBIfam" id="TIGR01024">
    <property type="entry name" value="rplS_bact"/>
    <property type="match status" value="1"/>
</dbReference>
<dbReference type="PANTHER" id="PTHR15680:SF9">
    <property type="entry name" value="LARGE RIBOSOMAL SUBUNIT PROTEIN BL19M"/>
    <property type="match status" value="1"/>
</dbReference>
<dbReference type="PANTHER" id="PTHR15680">
    <property type="entry name" value="RIBOSOMAL PROTEIN L19"/>
    <property type="match status" value="1"/>
</dbReference>
<dbReference type="Pfam" id="PF01245">
    <property type="entry name" value="Ribosomal_L19"/>
    <property type="match status" value="1"/>
</dbReference>
<dbReference type="PIRSF" id="PIRSF002191">
    <property type="entry name" value="Ribosomal_L19"/>
    <property type="match status" value="1"/>
</dbReference>
<dbReference type="PRINTS" id="PR00061">
    <property type="entry name" value="RIBOSOMALL19"/>
</dbReference>
<dbReference type="SUPFAM" id="SSF50104">
    <property type="entry name" value="Translation proteins SH3-like domain"/>
    <property type="match status" value="1"/>
</dbReference>
<dbReference type="PROSITE" id="PS01015">
    <property type="entry name" value="RIBOSOMAL_L19"/>
    <property type="match status" value="1"/>
</dbReference>
<keyword id="KW-1185">Reference proteome</keyword>
<keyword id="KW-0687">Ribonucleoprotein</keyword>
<keyword id="KW-0689">Ribosomal protein</keyword>
<protein>
    <recommendedName>
        <fullName evidence="1">Large ribosomal subunit protein bL19</fullName>
    </recommendedName>
    <alternativeName>
        <fullName evidence="2">50S ribosomal protein L19</fullName>
    </alternativeName>
</protein>
<accession>Q72DU4</accession>
<reference key="1">
    <citation type="journal article" date="2004" name="Nat. Biotechnol.">
        <title>The genome sequence of the anaerobic, sulfate-reducing bacterium Desulfovibrio vulgaris Hildenborough.</title>
        <authorList>
            <person name="Heidelberg J.F."/>
            <person name="Seshadri R."/>
            <person name="Haveman S.A."/>
            <person name="Hemme C.L."/>
            <person name="Paulsen I.T."/>
            <person name="Kolonay J.F."/>
            <person name="Eisen J.A."/>
            <person name="Ward N.L."/>
            <person name="Methe B.A."/>
            <person name="Brinkac L.M."/>
            <person name="Daugherty S.C."/>
            <person name="DeBoy R.T."/>
            <person name="Dodson R.J."/>
            <person name="Durkin A.S."/>
            <person name="Madupu R."/>
            <person name="Nelson W.C."/>
            <person name="Sullivan S.A."/>
            <person name="Fouts D.E."/>
            <person name="Haft D.H."/>
            <person name="Selengut J."/>
            <person name="Peterson J.D."/>
            <person name="Davidsen T.M."/>
            <person name="Zafar N."/>
            <person name="Zhou L."/>
            <person name="Radune D."/>
            <person name="Dimitrov G."/>
            <person name="Hance M."/>
            <person name="Tran K."/>
            <person name="Khouri H.M."/>
            <person name="Gill J."/>
            <person name="Utterback T.R."/>
            <person name="Feldblyum T.V."/>
            <person name="Wall J.D."/>
            <person name="Voordouw G."/>
            <person name="Fraser C.M."/>
        </authorList>
    </citation>
    <scope>NUCLEOTIDE SEQUENCE [LARGE SCALE GENOMIC DNA]</scope>
    <source>
        <strain>ATCC 29579 / DSM 644 / CCUG 34227 / NCIMB 8303 / VKM B-1760 / Hildenborough</strain>
    </source>
</reference>
<feature type="chain" id="PRO_0000163450" description="Large ribosomal subunit protein bL19">
    <location>
        <begin position="1"/>
        <end position="115"/>
    </location>
</feature>
<gene>
    <name evidence="1" type="primary">rplS</name>
    <name type="ordered locus">DVU_0835</name>
</gene>
<organism>
    <name type="scientific">Nitratidesulfovibrio vulgaris (strain ATCC 29579 / DSM 644 / CCUG 34227 / NCIMB 8303 / VKM B-1760 / Hildenborough)</name>
    <name type="common">Desulfovibrio vulgaris</name>
    <dbReference type="NCBI Taxonomy" id="882"/>
    <lineage>
        <taxon>Bacteria</taxon>
        <taxon>Pseudomonadati</taxon>
        <taxon>Thermodesulfobacteriota</taxon>
        <taxon>Desulfovibrionia</taxon>
        <taxon>Desulfovibrionales</taxon>
        <taxon>Desulfovibrionaceae</taxon>
        <taxon>Nitratidesulfovibrio</taxon>
    </lineage>
</organism>
<name>RL19_NITV2</name>
<evidence type="ECO:0000255" key="1">
    <source>
        <dbReference type="HAMAP-Rule" id="MF_00402"/>
    </source>
</evidence>
<evidence type="ECO:0000305" key="2"/>
<sequence length="115" mass="13501">MDIMKKIELEHLRMDLPKFRSGDTVKVHLRIVEGEKERIQMFQGNVIRIHRGTTGGTFTVRKVSDGVGVERVFPLHSPFIDRVELITEGRVRRSRLYYLRDLRGKAARIKPKNRF</sequence>
<comment type="function">
    <text evidence="1">This protein is located at the 30S-50S ribosomal subunit interface and may play a role in the structure and function of the aminoacyl-tRNA binding site.</text>
</comment>
<comment type="similarity">
    <text evidence="1">Belongs to the bacterial ribosomal protein bL19 family.</text>
</comment>